<feature type="chain" id="PRO_0000161141" description="Elongation factor Ts">
    <location>
        <begin position="1"/>
        <end position="199"/>
    </location>
</feature>
<feature type="region of interest" description="Involved in Mg(2+) ion dislocation from EF-Tu" evidence="1">
    <location>
        <begin position="82"/>
        <end position="85"/>
    </location>
</feature>
<comment type="function">
    <text evidence="1">Associates with the EF-Tu.GDP complex and induces the exchange of GDP to GTP. It remains bound to the aminoacyl-tRNA.EF-Tu.GTP complex up to the GTP hydrolysis stage on the ribosome.</text>
</comment>
<comment type="subcellular location">
    <subcellularLocation>
        <location evidence="1">Cytoplasm</location>
    </subcellularLocation>
</comment>
<comment type="similarity">
    <text evidence="1">Belongs to the EF-Ts family.</text>
</comment>
<proteinExistence type="inferred from homology"/>
<sequence>MAAVTTDLIRELRERTSAGMMDCKKALEENNADIEKAITWLREKGIAKAAKKAGRETKEGRVVSYIHGNGKIGVLVELNSETDFVSKNEDFEALGKEICMQIAAMNPLYLNEESIPAADLEKEKTIMRSQLEAEGKKADQIEKILPGKIKKYISEVCLVNQAFFKDDSKTIDDLVKEAIAKFGENITIARFIRFQVGGL</sequence>
<gene>
    <name evidence="1" type="primary">tsf</name>
    <name type="ordered locus">LIC_10851</name>
</gene>
<reference key="1">
    <citation type="journal article" date="2004" name="J. Bacteriol.">
        <title>Comparative genomics of two Leptospira interrogans serovars reveals novel insights into physiology and pathogenesis.</title>
        <authorList>
            <person name="Nascimento A.L.T.O."/>
            <person name="Ko A.I."/>
            <person name="Martins E.A.L."/>
            <person name="Monteiro-Vitorello C.B."/>
            <person name="Ho P.L."/>
            <person name="Haake D.A."/>
            <person name="Verjovski-Almeida S."/>
            <person name="Hartskeerl R.A."/>
            <person name="Marques M.V."/>
            <person name="Oliveira M.C."/>
            <person name="Menck C.F.M."/>
            <person name="Leite L.C.C."/>
            <person name="Carrer H."/>
            <person name="Coutinho L.L."/>
            <person name="Degrave W.M."/>
            <person name="Dellagostin O.A."/>
            <person name="El-Dorry H."/>
            <person name="Ferro E.S."/>
            <person name="Ferro M.I.T."/>
            <person name="Furlan L.R."/>
            <person name="Gamberini M."/>
            <person name="Giglioti E.A."/>
            <person name="Goes-Neto A."/>
            <person name="Goldman G.H."/>
            <person name="Goldman M.H.S."/>
            <person name="Harakava R."/>
            <person name="Jeronimo S.M.B."/>
            <person name="Junqueira-de-Azevedo I.L.M."/>
            <person name="Kimura E.T."/>
            <person name="Kuramae E.E."/>
            <person name="Lemos E.G.M."/>
            <person name="Lemos M.V.F."/>
            <person name="Marino C.L."/>
            <person name="Nunes L.R."/>
            <person name="de Oliveira R.C."/>
            <person name="Pereira G.G."/>
            <person name="Reis M.S."/>
            <person name="Schriefer A."/>
            <person name="Siqueira W.J."/>
            <person name="Sommer P."/>
            <person name="Tsai S.M."/>
            <person name="Simpson A.J.G."/>
            <person name="Ferro J.A."/>
            <person name="Camargo L.E.A."/>
            <person name="Kitajima J.P."/>
            <person name="Setubal J.C."/>
            <person name="Van Sluys M.A."/>
        </authorList>
    </citation>
    <scope>NUCLEOTIDE SEQUENCE [LARGE SCALE GENOMIC DNA]</scope>
    <source>
        <strain>Fiocruz L1-130</strain>
    </source>
</reference>
<evidence type="ECO:0000255" key="1">
    <source>
        <dbReference type="HAMAP-Rule" id="MF_00050"/>
    </source>
</evidence>
<name>EFTS_LEPIC</name>
<dbReference type="EMBL" id="AE016823">
    <property type="protein sequence ID" value="AAS69465.1"/>
    <property type="molecule type" value="Genomic_DNA"/>
</dbReference>
<dbReference type="RefSeq" id="WP_000741905.1">
    <property type="nucleotide sequence ID" value="NC_005823.1"/>
</dbReference>
<dbReference type="SMR" id="Q72U13"/>
<dbReference type="GeneID" id="61144183"/>
<dbReference type="KEGG" id="lic:LIC_10851"/>
<dbReference type="HOGENOM" id="CLU_047155_1_1_12"/>
<dbReference type="Proteomes" id="UP000007037">
    <property type="component" value="Chromosome I"/>
</dbReference>
<dbReference type="GO" id="GO:0005737">
    <property type="term" value="C:cytoplasm"/>
    <property type="evidence" value="ECO:0007669"/>
    <property type="project" value="UniProtKB-SubCell"/>
</dbReference>
<dbReference type="GO" id="GO:0003746">
    <property type="term" value="F:translation elongation factor activity"/>
    <property type="evidence" value="ECO:0007669"/>
    <property type="project" value="UniProtKB-UniRule"/>
</dbReference>
<dbReference type="CDD" id="cd14275">
    <property type="entry name" value="UBA_EF-Ts"/>
    <property type="match status" value="1"/>
</dbReference>
<dbReference type="FunFam" id="1.10.286.20:FF:000001">
    <property type="entry name" value="Elongation factor Ts"/>
    <property type="match status" value="1"/>
</dbReference>
<dbReference type="FunFam" id="1.10.8.10:FF:000001">
    <property type="entry name" value="Elongation factor Ts"/>
    <property type="match status" value="1"/>
</dbReference>
<dbReference type="Gene3D" id="1.10.286.20">
    <property type="match status" value="1"/>
</dbReference>
<dbReference type="Gene3D" id="1.10.8.10">
    <property type="entry name" value="DNA helicase RuvA subunit, C-terminal domain"/>
    <property type="match status" value="1"/>
</dbReference>
<dbReference type="Gene3D" id="3.30.479.20">
    <property type="entry name" value="Elongation factor Ts, dimerisation domain"/>
    <property type="match status" value="1"/>
</dbReference>
<dbReference type="HAMAP" id="MF_00050">
    <property type="entry name" value="EF_Ts"/>
    <property type="match status" value="1"/>
</dbReference>
<dbReference type="InterPro" id="IPR036402">
    <property type="entry name" value="EF-Ts_dimer_sf"/>
</dbReference>
<dbReference type="InterPro" id="IPR001816">
    <property type="entry name" value="Transl_elong_EFTs/EF1B"/>
</dbReference>
<dbReference type="InterPro" id="IPR014039">
    <property type="entry name" value="Transl_elong_EFTs/EF1B_dimer"/>
</dbReference>
<dbReference type="InterPro" id="IPR018101">
    <property type="entry name" value="Transl_elong_Ts_CS"/>
</dbReference>
<dbReference type="InterPro" id="IPR009060">
    <property type="entry name" value="UBA-like_sf"/>
</dbReference>
<dbReference type="NCBIfam" id="TIGR00116">
    <property type="entry name" value="tsf"/>
    <property type="match status" value="1"/>
</dbReference>
<dbReference type="PANTHER" id="PTHR11741">
    <property type="entry name" value="ELONGATION FACTOR TS"/>
    <property type="match status" value="1"/>
</dbReference>
<dbReference type="PANTHER" id="PTHR11741:SF0">
    <property type="entry name" value="ELONGATION FACTOR TS, MITOCHONDRIAL"/>
    <property type="match status" value="1"/>
</dbReference>
<dbReference type="Pfam" id="PF00889">
    <property type="entry name" value="EF_TS"/>
    <property type="match status" value="1"/>
</dbReference>
<dbReference type="SUPFAM" id="SSF54713">
    <property type="entry name" value="Elongation factor Ts (EF-Ts), dimerisation domain"/>
    <property type="match status" value="1"/>
</dbReference>
<dbReference type="SUPFAM" id="SSF46934">
    <property type="entry name" value="UBA-like"/>
    <property type="match status" value="1"/>
</dbReference>
<dbReference type="PROSITE" id="PS01126">
    <property type="entry name" value="EF_TS_1"/>
    <property type="match status" value="1"/>
</dbReference>
<dbReference type="PROSITE" id="PS01127">
    <property type="entry name" value="EF_TS_2"/>
    <property type="match status" value="1"/>
</dbReference>
<protein>
    <recommendedName>
        <fullName evidence="1">Elongation factor Ts</fullName>
        <shortName evidence="1">EF-Ts</shortName>
    </recommendedName>
</protein>
<accession>Q72U13</accession>
<organism>
    <name type="scientific">Leptospira interrogans serogroup Icterohaemorrhagiae serovar copenhageni (strain Fiocruz L1-130)</name>
    <dbReference type="NCBI Taxonomy" id="267671"/>
    <lineage>
        <taxon>Bacteria</taxon>
        <taxon>Pseudomonadati</taxon>
        <taxon>Spirochaetota</taxon>
        <taxon>Spirochaetia</taxon>
        <taxon>Leptospirales</taxon>
        <taxon>Leptospiraceae</taxon>
        <taxon>Leptospira</taxon>
    </lineage>
</organism>
<keyword id="KW-0963">Cytoplasm</keyword>
<keyword id="KW-0251">Elongation factor</keyword>
<keyword id="KW-0648">Protein biosynthesis</keyword>